<name>RL6_GLAP5</name>
<proteinExistence type="inferred from homology"/>
<sequence length="177" mass="18837">MSRVAKAPVAVPAGVQVTLNGQLLTVKGKNGELSREIHNAVEVKYEADTLTFAPKAGIVNADAQAGTARALVNAMVIGVTEGFTKKLQLVGVGYRAQMKGNTVALNLGFSHSVEHELPAGVTGECPSQTEIILKSADKQLIGQVAADIRAYRKPEPYKGKGVRYADEVVRIKEAKKK</sequence>
<keyword id="KW-1185">Reference proteome</keyword>
<keyword id="KW-0687">Ribonucleoprotein</keyword>
<keyword id="KW-0689">Ribosomal protein</keyword>
<keyword id="KW-0694">RNA-binding</keyword>
<keyword id="KW-0699">rRNA-binding</keyword>
<protein>
    <recommendedName>
        <fullName evidence="1">Large ribosomal subunit protein uL6</fullName>
    </recommendedName>
    <alternativeName>
        <fullName evidence="2">50S ribosomal protein L6</fullName>
    </alternativeName>
</protein>
<reference key="1">
    <citation type="journal article" date="2009" name="J. Bacteriol.">
        <title>Complete genome sequence of Haemophilus parasuis SH0165.</title>
        <authorList>
            <person name="Yue M."/>
            <person name="Yang F."/>
            <person name="Yang J."/>
            <person name="Bei W."/>
            <person name="Cai X."/>
            <person name="Chen L."/>
            <person name="Dong J."/>
            <person name="Zhou R."/>
            <person name="Jin M."/>
            <person name="Jin Q."/>
            <person name="Chen H."/>
        </authorList>
    </citation>
    <scope>NUCLEOTIDE SEQUENCE [LARGE SCALE GENOMIC DNA]</scope>
    <source>
        <strain>SH0165</strain>
    </source>
</reference>
<feature type="chain" id="PRO_1000166813" description="Large ribosomal subunit protein uL6">
    <location>
        <begin position="1"/>
        <end position="177"/>
    </location>
</feature>
<accession>B8F6Q6</accession>
<gene>
    <name evidence="1" type="primary">rplF</name>
    <name type="ordered locus">HAPS_1439</name>
</gene>
<organism>
    <name type="scientific">Glaesserella parasuis serovar 5 (strain SH0165)</name>
    <name type="common">Haemophilus parasuis</name>
    <dbReference type="NCBI Taxonomy" id="557723"/>
    <lineage>
        <taxon>Bacteria</taxon>
        <taxon>Pseudomonadati</taxon>
        <taxon>Pseudomonadota</taxon>
        <taxon>Gammaproteobacteria</taxon>
        <taxon>Pasteurellales</taxon>
        <taxon>Pasteurellaceae</taxon>
        <taxon>Glaesserella</taxon>
    </lineage>
</organism>
<dbReference type="EMBL" id="CP001321">
    <property type="protein sequence ID" value="ACL33008.1"/>
    <property type="molecule type" value="Genomic_DNA"/>
</dbReference>
<dbReference type="RefSeq" id="WP_005711990.1">
    <property type="nucleotide sequence ID" value="NC_011852.1"/>
</dbReference>
<dbReference type="SMR" id="B8F6Q6"/>
<dbReference type="STRING" id="557723.HAPS_1439"/>
<dbReference type="GeneID" id="66617804"/>
<dbReference type="KEGG" id="hap:HAPS_1439"/>
<dbReference type="HOGENOM" id="CLU_065464_1_2_6"/>
<dbReference type="Proteomes" id="UP000006743">
    <property type="component" value="Chromosome"/>
</dbReference>
<dbReference type="GO" id="GO:0022625">
    <property type="term" value="C:cytosolic large ribosomal subunit"/>
    <property type="evidence" value="ECO:0007669"/>
    <property type="project" value="TreeGrafter"/>
</dbReference>
<dbReference type="GO" id="GO:0019843">
    <property type="term" value="F:rRNA binding"/>
    <property type="evidence" value="ECO:0007669"/>
    <property type="project" value="UniProtKB-UniRule"/>
</dbReference>
<dbReference type="GO" id="GO:0003735">
    <property type="term" value="F:structural constituent of ribosome"/>
    <property type="evidence" value="ECO:0007669"/>
    <property type="project" value="InterPro"/>
</dbReference>
<dbReference type="GO" id="GO:0002181">
    <property type="term" value="P:cytoplasmic translation"/>
    <property type="evidence" value="ECO:0007669"/>
    <property type="project" value="TreeGrafter"/>
</dbReference>
<dbReference type="FunFam" id="3.90.930.12:FF:000001">
    <property type="entry name" value="50S ribosomal protein L6"/>
    <property type="match status" value="1"/>
</dbReference>
<dbReference type="FunFam" id="3.90.930.12:FF:000002">
    <property type="entry name" value="50S ribosomal protein L6"/>
    <property type="match status" value="1"/>
</dbReference>
<dbReference type="Gene3D" id="3.90.930.12">
    <property type="entry name" value="Ribosomal protein L6, alpha-beta domain"/>
    <property type="match status" value="2"/>
</dbReference>
<dbReference type="HAMAP" id="MF_01365_B">
    <property type="entry name" value="Ribosomal_uL6_B"/>
    <property type="match status" value="1"/>
</dbReference>
<dbReference type="InterPro" id="IPR000702">
    <property type="entry name" value="Ribosomal_uL6-like"/>
</dbReference>
<dbReference type="InterPro" id="IPR036789">
    <property type="entry name" value="Ribosomal_uL6-like_a/b-dom_sf"/>
</dbReference>
<dbReference type="InterPro" id="IPR020040">
    <property type="entry name" value="Ribosomal_uL6_a/b-dom"/>
</dbReference>
<dbReference type="InterPro" id="IPR019906">
    <property type="entry name" value="Ribosomal_uL6_bac-type"/>
</dbReference>
<dbReference type="InterPro" id="IPR002358">
    <property type="entry name" value="Ribosomal_uL6_CS"/>
</dbReference>
<dbReference type="NCBIfam" id="TIGR03654">
    <property type="entry name" value="L6_bact"/>
    <property type="match status" value="1"/>
</dbReference>
<dbReference type="PANTHER" id="PTHR11655">
    <property type="entry name" value="60S/50S RIBOSOMAL PROTEIN L6/L9"/>
    <property type="match status" value="1"/>
</dbReference>
<dbReference type="PANTHER" id="PTHR11655:SF14">
    <property type="entry name" value="LARGE RIBOSOMAL SUBUNIT PROTEIN UL6M"/>
    <property type="match status" value="1"/>
</dbReference>
<dbReference type="Pfam" id="PF00347">
    <property type="entry name" value="Ribosomal_L6"/>
    <property type="match status" value="2"/>
</dbReference>
<dbReference type="PIRSF" id="PIRSF002162">
    <property type="entry name" value="Ribosomal_L6"/>
    <property type="match status" value="1"/>
</dbReference>
<dbReference type="PRINTS" id="PR00059">
    <property type="entry name" value="RIBOSOMALL6"/>
</dbReference>
<dbReference type="SUPFAM" id="SSF56053">
    <property type="entry name" value="Ribosomal protein L6"/>
    <property type="match status" value="2"/>
</dbReference>
<dbReference type="PROSITE" id="PS00525">
    <property type="entry name" value="RIBOSOMAL_L6_1"/>
    <property type="match status" value="1"/>
</dbReference>
<evidence type="ECO:0000255" key="1">
    <source>
        <dbReference type="HAMAP-Rule" id="MF_01365"/>
    </source>
</evidence>
<evidence type="ECO:0000305" key="2"/>
<comment type="function">
    <text evidence="1">This protein binds to the 23S rRNA, and is important in its secondary structure. It is located near the subunit interface in the base of the L7/L12 stalk, and near the tRNA binding site of the peptidyltransferase center.</text>
</comment>
<comment type="subunit">
    <text evidence="1">Part of the 50S ribosomal subunit.</text>
</comment>
<comment type="similarity">
    <text evidence="1">Belongs to the universal ribosomal protein uL6 family.</text>
</comment>